<feature type="chain" id="PRO_0000094849" description="Protein phosphatase Slingshot">
    <location>
        <begin position="1"/>
        <end position="1045"/>
    </location>
</feature>
<feature type="domain" description="DEK-C" evidence="2">
    <location>
        <begin position="324"/>
        <end position="379"/>
    </location>
</feature>
<feature type="domain" description="Tyrosine-protein phosphatase" evidence="1">
    <location>
        <begin position="383"/>
        <end position="524"/>
    </location>
</feature>
<feature type="region of interest" description="Disordered" evidence="4">
    <location>
        <begin position="1"/>
        <end position="35"/>
    </location>
</feature>
<feature type="region of interest" description="Disordered" evidence="4">
    <location>
        <begin position="58"/>
        <end position="80"/>
    </location>
</feature>
<feature type="region of interest" description="Disordered" evidence="4">
    <location>
        <begin position="143"/>
        <end position="194"/>
    </location>
</feature>
<feature type="region of interest" description="Disordered" evidence="4">
    <location>
        <begin position="306"/>
        <end position="325"/>
    </location>
</feature>
<feature type="region of interest" description="Disordered" evidence="4">
    <location>
        <begin position="529"/>
        <end position="631"/>
    </location>
</feature>
<feature type="region of interest" description="Disordered" evidence="4">
    <location>
        <begin position="699"/>
        <end position="799"/>
    </location>
</feature>
<feature type="region of interest" description="Disordered" evidence="4">
    <location>
        <begin position="1001"/>
        <end position="1045"/>
    </location>
</feature>
<feature type="compositionally biased region" description="Polar residues" evidence="4">
    <location>
        <begin position="1"/>
        <end position="20"/>
    </location>
</feature>
<feature type="compositionally biased region" description="Low complexity" evidence="4">
    <location>
        <begin position="66"/>
        <end position="80"/>
    </location>
</feature>
<feature type="compositionally biased region" description="Polar residues" evidence="4">
    <location>
        <begin position="149"/>
        <end position="174"/>
    </location>
</feature>
<feature type="compositionally biased region" description="Basic and acidic residues" evidence="4">
    <location>
        <begin position="175"/>
        <end position="185"/>
    </location>
</feature>
<feature type="compositionally biased region" description="Basic and acidic residues" evidence="4">
    <location>
        <begin position="529"/>
        <end position="547"/>
    </location>
</feature>
<feature type="compositionally biased region" description="Polar residues" evidence="4">
    <location>
        <begin position="560"/>
        <end position="569"/>
    </location>
</feature>
<feature type="compositionally biased region" description="Basic residues" evidence="4">
    <location>
        <begin position="586"/>
        <end position="601"/>
    </location>
</feature>
<feature type="compositionally biased region" description="Polar residues" evidence="4">
    <location>
        <begin position="602"/>
        <end position="625"/>
    </location>
</feature>
<feature type="compositionally biased region" description="Low complexity" evidence="4">
    <location>
        <begin position="704"/>
        <end position="713"/>
    </location>
</feature>
<feature type="compositionally biased region" description="Low complexity" evidence="4">
    <location>
        <begin position="721"/>
        <end position="732"/>
    </location>
</feature>
<feature type="compositionally biased region" description="Polar residues" evidence="4">
    <location>
        <begin position="764"/>
        <end position="774"/>
    </location>
</feature>
<feature type="compositionally biased region" description="Polar residues" evidence="4">
    <location>
        <begin position="1008"/>
        <end position="1021"/>
    </location>
</feature>
<feature type="compositionally biased region" description="Low complexity" evidence="4">
    <location>
        <begin position="1029"/>
        <end position="1045"/>
    </location>
</feature>
<feature type="active site" description="Phosphocysteine intermediate" evidence="1">
    <location>
        <position position="468"/>
    </location>
</feature>
<feature type="modified residue" description="Phosphoserine" evidence="8">
    <location>
        <position position="719"/>
    </location>
</feature>
<feature type="splice variant" id="VSP_016339" description="In isoform 2." evidence="9">
    <original>MALVTVQRSPSVAGSCSNS</original>
    <variation>MSMQVCSLPDDILIFSLTPR</variation>
    <location>
        <begin position="1"/>
        <end position="19"/>
    </location>
</feature>
<feature type="mutagenesis site" description="Abrogates phosphatase activity." evidence="5 6">
    <original>C</original>
    <variation>S</variation>
    <location>
        <position position="468"/>
    </location>
</feature>
<organism>
    <name type="scientific">Drosophila melanogaster</name>
    <name type="common">Fruit fly</name>
    <dbReference type="NCBI Taxonomy" id="7227"/>
    <lineage>
        <taxon>Eukaryota</taxon>
        <taxon>Metazoa</taxon>
        <taxon>Ecdysozoa</taxon>
        <taxon>Arthropoda</taxon>
        <taxon>Hexapoda</taxon>
        <taxon>Insecta</taxon>
        <taxon>Pterygota</taxon>
        <taxon>Neoptera</taxon>
        <taxon>Endopterygota</taxon>
        <taxon>Diptera</taxon>
        <taxon>Brachycera</taxon>
        <taxon>Muscomorpha</taxon>
        <taxon>Ephydroidea</taxon>
        <taxon>Drosophilidae</taxon>
        <taxon>Drosophila</taxon>
        <taxon>Sophophora</taxon>
    </lineage>
</organism>
<proteinExistence type="evidence at protein level"/>
<accession>Q6NN85</accession>
<accession>Q7KS05</accession>
<accession>Q8IMU8</accession>
<accession>Q9NKY1</accession>
<accession>Q9VC04</accession>
<gene>
    <name type="primary">ssh</name>
    <name type="ORF">CG6238</name>
</gene>
<protein>
    <recommendedName>
        <fullName>Protein phosphatase Slingshot</fullName>
        <ecNumber>3.1.3.16</ecNumber>
        <ecNumber>3.1.3.48</ecNumber>
    </recommendedName>
</protein>
<dbReference type="EC" id="3.1.3.16"/>
<dbReference type="EC" id="3.1.3.48"/>
<dbReference type="EMBL" id="AB036834">
    <property type="protein sequence ID" value="BAA89534.1"/>
    <property type="molecule type" value="mRNA"/>
</dbReference>
<dbReference type="EMBL" id="AE014297">
    <property type="protein sequence ID" value="AAF56372.3"/>
    <property type="status" value="ALT_SEQ"/>
    <property type="molecule type" value="Genomic_DNA"/>
</dbReference>
<dbReference type="EMBL" id="AE014297">
    <property type="protein sequence ID" value="AAN14027.1"/>
    <property type="status" value="ALT_SEQ"/>
    <property type="molecule type" value="Genomic_DNA"/>
</dbReference>
<dbReference type="EMBL" id="BT011408">
    <property type="protein sequence ID" value="AAR96200.1"/>
    <property type="molecule type" value="mRNA"/>
</dbReference>
<dbReference type="RefSeq" id="NP_001163716.1">
    <molecule id="Q6NN85-2"/>
    <property type="nucleotide sequence ID" value="NM_001170245.1"/>
</dbReference>
<dbReference type="RefSeq" id="NP_001163717.1">
    <molecule id="Q6NN85-1"/>
    <property type="nucleotide sequence ID" value="NM_001170246.1"/>
</dbReference>
<dbReference type="RefSeq" id="NP_524492.2">
    <property type="nucleotide sequence ID" value="NM_079768.4"/>
</dbReference>
<dbReference type="RefSeq" id="NP_733063.1">
    <property type="nucleotide sequence ID" value="NM_170184.2"/>
</dbReference>
<dbReference type="SMR" id="Q6NN85"/>
<dbReference type="BioGRID" id="67907">
    <property type="interactions" value="16"/>
</dbReference>
<dbReference type="FunCoup" id="Q6NN85">
    <property type="interactions" value="600"/>
</dbReference>
<dbReference type="IntAct" id="Q6NN85">
    <property type="interactions" value="4"/>
</dbReference>
<dbReference type="STRING" id="7227.FBpp0084175"/>
<dbReference type="iPTMnet" id="Q6NN85"/>
<dbReference type="PaxDb" id="7227-FBpp0084175"/>
<dbReference type="DNASU" id="42986"/>
<dbReference type="EnsemblMetazoa" id="FBtr0301612">
    <molecule id="Q6NN85-2"/>
    <property type="protein sequence ID" value="FBpp0290827"/>
    <property type="gene ID" value="FBgn0029157"/>
</dbReference>
<dbReference type="EnsemblMetazoa" id="FBtr0301613">
    <molecule id="Q6NN85-1"/>
    <property type="protein sequence ID" value="FBpp0290828"/>
    <property type="gene ID" value="FBgn0029157"/>
</dbReference>
<dbReference type="GeneID" id="42986"/>
<dbReference type="KEGG" id="dme:Dmel_CG6238"/>
<dbReference type="UCSC" id="CG6238-RA">
    <molecule id="Q6NN85-1"/>
    <property type="organism name" value="d. melanogaster"/>
</dbReference>
<dbReference type="AGR" id="FB:FBgn0029157"/>
<dbReference type="CTD" id="42986"/>
<dbReference type="FlyBase" id="FBgn0029157">
    <property type="gene designation" value="ssh"/>
</dbReference>
<dbReference type="VEuPathDB" id="VectorBase:FBgn0029157"/>
<dbReference type="eggNOG" id="KOG1716">
    <property type="taxonomic scope" value="Eukaryota"/>
</dbReference>
<dbReference type="GeneTree" id="ENSGT00940000171707"/>
<dbReference type="HOGENOM" id="CLU_004876_0_0_1"/>
<dbReference type="InParanoid" id="Q6NN85"/>
<dbReference type="OMA" id="RIMRHNS"/>
<dbReference type="OrthoDB" id="5779068at2759"/>
<dbReference type="PhylomeDB" id="Q6NN85"/>
<dbReference type="BioGRID-ORCS" id="42986">
    <property type="hits" value="0 hits in 3 CRISPR screens"/>
</dbReference>
<dbReference type="GenomeRNAi" id="42986"/>
<dbReference type="PRO" id="PR:Q6NN85"/>
<dbReference type="Proteomes" id="UP000000803">
    <property type="component" value="Chromosome 3R"/>
</dbReference>
<dbReference type="Bgee" id="FBgn0029157">
    <property type="expression patterns" value="Expressed in adult posterior midgut class II enteroendocrine cell in adult midgut (Drosophila) and 164 other cell types or tissues"/>
</dbReference>
<dbReference type="ExpressionAtlas" id="Q6NN85">
    <property type="expression patterns" value="baseline and differential"/>
</dbReference>
<dbReference type="GO" id="GO:0045177">
    <property type="term" value="C:apical part of cell"/>
    <property type="evidence" value="ECO:0000314"/>
    <property type="project" value="UniProtKB"/>
</dbReference>
<dbReference type="GO" id="GO:0005737">
    <property type="term" value="C:cytoplasm"/>
    <property type="evidence" value="ECO:0000318"/>
    <property type="project" value="GO_Central"/>
</dbReference>
<dbReference type="GO" id="GO:0005856">
    <property type="term" value="C:cytoskeleton"/>
    <property type="evidence" value="ECO:0007669"/>
    <property type="project" value="UniProtKB-SubCell"/>
</dbReference>
<dbReference type="GO" id="GO:0003779">
    <property type="term" value="F:actin binding"/>
    <property type="evidence" value="ECO:0000314"/>
    <property type="project" value="UniProtKB"/>
</dbReference>
<dbReference type="GO" id="GO:0004721">
    <property type="term" value="F:phosphoprotein phosphatase activity"/>
    <property type="evidence" value="ECO:0000314"/>
    <property type="project" value="UniProtKB"/>
</dbReference>
<dbReference type="GO" id="GO:0004722">
    <property type="term" value="F:protein serine/threonine phosphatase activity"/>
    <property type="evidence" value="ECO:0007669"/>
    <property type="project" value="UniProtKB-EC"/>
</dbReference>
<dbReference type="GO" id="GO:0004725">
    <property type="term" value="F:protein tyrosine phosphatase activity"/>
    <property type="evidence" value="ECO:0007669"/>
    <property type="project" value="UniProtKB-EC"/>
</dbReference>
<dbReference type="GO" id="GO:0030036">
    <property type="term" value="P:actin cytoskeleton organization"/>
    <property type="evidence" value="ECO:0000318"/>
    <property type="project" value="GO_Central"/>
</dbReference>
<dbReference type="GO" id="GO:0007409">
    <property type="term" value="P:axonogenesis"/>
    <property type="evidence" value="ECO:0000315"/>
    <property type="project" value="UniProtKB"/>
</dbReference>
<dbReference type="GO" id="GO:0000902">
    <property type="term" value="P:cell morphogenesis"/>
    <property type="evidence" value="ECO:0000315"/>
    <property type="project" value="UniProtKB"/>
</dbReference>
<dbReference type="GO" id="GO:0048749">
    <property type="term" value="P:compound eye development"/>
    <property type="evidence" value="ECO:0000316"/>
    <property type="project" value="FlyBase"/>
</dbReference>
<dbReference type="GO" id="GO:0000278">
    <property type="term" value="P:mitotic cell cycle"/>
    <property type="evidence" value="ECO:0000315"/>
    <property type="project" value="FlyBase"/>
</dbReference>
<dbReference type="GO" id="GO:0016319">
    <property type="term" value="P:mushroom body development"/>
    <property type="evidence" value="ECO:0000315"/>
    <property type="project" value="FlyBase"/>
</dbReference>
<dbReference type="GO" id="GO:0030837">
    <property type="term" value="P:negative regulation of actin filament polymerization"/>
    <property type="evidence" value="ECO:0000314"/>
    <property type="project" value="UniProtKB"/>
</dbReference>
<dbReference type="GO" id="GO:0007097">
    <property type="term" value="P:nuclear migration"/>
    <property type="evidence" value="ECO:0000315"/>
    <property type="project" value="UniProtKB"/>
</dbReference>
<dbReference type="GO" id="GO:0006470">
    <property type="term" value="P:protein dephosphorylation"/>
    <property type="evidence" value="ECO:0000315"/>
    <property type="project" value="UniProtKB"/>
</dbReference>
<dbReference type="GO" id="GO:0030833">
    <property type="term" value="P:regulation of actin filament polymerization"/>
    <property type="evidence" value="ECO:0000315"/>
    <property type="project" value="UniProtKB"/>
</dbReference>
<dbReference type="GO" id="GO:0008064">
    <property type="term" value="P:regulation of actin polymerization or depolymerization"/>
    <property type="evidence" value="ECO:0000315"/>
    <property type="project" value="FlyBase"/>
</dbReference>
<dbReference type="GO" id="GO:0050770">
    <property type="term" value="P:regulation of axonogenesis"/>
    <property type="evidence" value="ECO:0000315"/>
    <property type="project" value="FlyBase"/>
</dbReference>
<dbReference type="GO" id="GO:0010591">
    <property type="term" value="P:regulation of lamellipodium assembly"/>
    <property type="evidence" value="ECO:0000315"/>
    <property type="project" value="FlyBase"/>
</dbReference>
<dbReference type="CDD" id="cd14513">
    <property type="entry name" value="DSP_slingshot"/>
    <property type="match status" value="1"/>
</dbReference>
<dbReference type="CDD" id="cd11652">
    <property type="entry name" value="SSH-N"/>
    <property type="match status" value="1"/>
</dbReference>
<dbReference type="FunFam" id="3.90.190.10:FF:000004">
    <property type="entry name" value="Protein phosphatase Slingshot homolog 2"/>
    <property type="match status" value="1"/>
</dbReference>
<dbReference type="Gene3D" id="1.10.10.60">
    <property type="entry name" value="Homeodomain-like"/>
    <property type="match status" value="1"/>
</dbReference>
<dbReference type="Gene3D" id="3.90.190.10">
    <property type="entry name" value="Protein tyrosine phosphatase superfamily"/>
    <property type="match status" value="1"/>
</dbReference>
<dbReference type="InterPro" id="IPR014876">
    <property type="entry name" value="DEK_C"/>
</dbReference>
<dbReference type="InterPro" id="IPR000340">
    <property type="entry name" value="Dual-sp_phosphatase_cat-dom"/>
</dbReference>
<dbReference type="InterPro" id="IPR043587">
    <property type="entry name" value="Phosphatase_SSH-like"/>
</dbReference>
<dbReference type="InterPro" id="IPR029021">
    <property type="entry name" value="Prot-tyrosine_phosphatase-like"/>
</dbReference>
<dbReference type="InterPro" id="IPR043588">
    <property type="entry name" value="SSH-N"/>
</dbReference>
<dbReference type="InterPro" id="IPR016130">
    <property type="entry name" value="Tyr_Pase_AS"/>
</dbReference>
<dbReference type="InterPro" id="IPR000387">
    <property type="entry name" value="Tyr_Pase_dom"/>
</dbReference>
<dbReference type="InterPro" id="IPR020422">
    <property type="entry name" value="TYR_PHOSPHATASE_DUAL_dom"/>
</dbReference>
<dbReference type="PANTHER" id="PTHR45864:SF2">
    <property type="entry name" value="PROTEIN PHOSPHATASE SLINGSHOT"/>
    <property type="match status" value="1"/>
</dbReference>
<dbReference type="PANTHER" id="PTHR45864">
    <property type="entry name" value="SLINGSHOT PROTEIN PHOSPHATASE HOMOLOG"/>
    <property type="match status" value="1"/>
</dbReference>
<dbReference type="Pfam" id="PF08766">
    <property type="entry name" value="DEK_C"/>
    <property type="match status" value="1"/>
</dbReference>
<dbReference type="Pfam" id="PF00782">
    <property type="entry name" value="DSPc"/>
    <property type="match status" value="1"/>
</dbReference>
<dbReference type="Pfam" id="PF23040">
    <property type="entry name" value="PH_SSH1-like_1st"/>
    <property type="match status" value="2"/>
</dbReference>
<dbReference type="SMART" id="SM00195">
    <property type="entry name" value="DSPc"/>
    <property type="match status" value="1"/>
</dbReference>
<dbReference type="SUPFAM" id="SSF52799">
    <property type="entry name" value="(Phosphotyrosine protein) phosphatases II"/>
    <property type="match status" value="1"/>
</dbReference>
<dbReference type="SUPFAM" id="SSF109715">
    <property type="entry name" value="DEK C-terminal domain"/>
    <property type="match status" value="1"/>
</dbReference>
<dbReference type="PROSITE" id="PS51998">
    <property type="entry name" value="DEK_C"/>
    <property type="match status" value="1"/>
</dbReference>
<dbReference type="PROSITE" id="PS00383">
    <property type="entry name" value="TYR_PHOSPHATASE_1"/>
    <property type="match status" value="1"/>
</dbReference>
<dbReference type="PROSITE" id="PS50056">
    <property type="entry name" value="TYR_PHOSPHATASE_2"/>
    <property type="match status" value="1"/>
</dbReference>
<dbReference type="PROSITE" id="PS50054">
    <property type="entry name" value="TYR_PHOSPHATASE_DUAL"/>
    <property type="match status" value="1"/>
</dbReference>
<reference key="1">
    <citation type="journal article" date="2002" name="Cell">
        <title>Control of actin reorganization by Slingshot, a family of phosphatases that dephosphorylate ADF/cofilin.</title>
        <authorList>
            <person name="Niwa R."/>
            <person name="Nagata-Ohashi K."/>
            <person name="Takeichi M."/>
            <person name="Mizuno K."/>
            <person name="Uemura T."/>
        </authorList>
    </citation>
    <scope>NUCLEOTIDE SEQUENCE [MRNA] (ISOFORM 1)</scope>
    <scope>FUNCTION</scope>
    <scope>INTERACTION WITH ACTIN</scope>
    <scope>MUTAGENESIS OF CYS-468</scope>
</reference>
<reference key="2">
    <citation type="journal article" date="2000" name="Science">
        <title>The genome sequence of Drosophila melanogaster.</title>
        <authorList>
            <person name="Adams M.D."/>
            <person name="Celniker S.E."/>
            <person name="Holt R.A."/>
            <person name="Evans C.A."/>
            <person name="Gocayne J.D."/>
            <person name="Amanatides P.G."/>
            <person name="Scherer S.E."/>
            <person name="Li P.W."/>
            <person name="Hoskins R.A."/>
            <person name="Galle R.F."/>
            <person name="George R.A."/>
            <person name="Lewis S.E."/>
            <person name="Richards S."/>
            <person name="Ashburner M."/>
            <person name="Henderson S.N."/>
            <person name="Sutton G.G."/>
            <person name="Wortman J.R."/>
            <person name="Yandell M.D."/>
            <person name="Zhang Q."/>
            <person name="Chen L.X."/>
            <person name="Brandon R.C."/>
            <person name="Rogers Y.-H.C."/>
            <person name="Blazej R.G."/>
            <person name="Champe M."/>
            <person name="Pfeiffer B.D."/>
            <person name="Wan K.H."/>
            <person name="Doyle C."/>
            <person name="Baxter E.G."/>
            <person name="Helt G."/>
            <person name="Nelson C.R."/>
            <person name="Miklos G.L.G."/>
            <person name="Abril J.F."/>
            <person name="Agbayani A."/>
            <person name="An H.-J."/>
            <person name="Andrews-Pfannkoch C."/>
            <person name="Baldwin D."/>
            <person name="Ballew R.M."/>
            <person name="Basu A."/>
            <person name="Baxendale J."/>
            <person name="Bayraktaroglu L."/>
            <person name="Beasley E.M."/>
            <person name="Beeson K.Y."/>
            <person name="Benos P.V."/>
            <person name="Berman B.P."/>
            <person name="Bhandari D."/>
            <person name="Bolshakov S."/>
            <person name="Borkova D."/>
            <person name="Botchan M.R."/>
            <person name="Bouck J."/>
            <person name="Brokstein P."/>
            <person name="Brottier P."/>
            <person name="Burtis K.C."/>
            <person name="Busam D.A."/>
            <person name="Butler H."/>
            <person name="Cadieu E."/>
            <person name="Center A."/>
            <person name="Chandra I."/>
            <person name="Cherry J.M."/>
            <person name="Cawley S."/>
            <person name="Dahlke C."/>
            <person name="Davenport L.B."/>
            <person name="Davies P."/>
            <person name="de Pablos B."/>
            <person name="Delcher A."/>
            <person name="Deng Z."/>
            <person name="Mays A.D."/>
            <person name="Dew I."/>
            <person name="Dietz S.M."/>
            <person name="Dodson K."/>
            <person name="Doup L.E."/>
            <person name="Downes M."/>
            <person name="Dugan-Rocha S."/>
            <person name="Dunkov B.C."/>
            <person name="Dunn P."/>
            <person name="Durbin K.J."/>
            <person name="Evangelista C.C."/>
            <person name="Ferraz C."/>
            <person name="Ferriera S."/>
            <person name="Fleischmann W."/>
            <person name="Fosler C."/>
            <person name="Gabrielian A.E."/>
            <person name="Garg N.S."/>
            <person name="Gelbart W.M."/>
            <person name="Glasser K."/>
            <person name="Glodek A."/>
            <person name="Gong F."/>
            <person name="Gorrell J.H."/>
            <person name="Gu Z."/>
            <person name="Guan P."/>
            <person name="Harris M."/>
            <person name="Harris N.L."/>
            <person name="Harvey D.A."/>
            <person name="Heiman T.J."/>
            <person name="Hernandez J.R."/>
            <person name="Houck J."/>
            <person name="Hostin D."/>
            <person name="Houston K.A."/>
            <person name="Howland T.J."/>
            <person name="Wei M.-H."/>
            <person name="Ibegwam C."/>
            <person name="Jalali M."/>
            <person name="Kalush F."/>
            <person name="Karpen G.H."/>
            <person name="Ke Z."/>
            <person name="Kennison J.A."/>
            <person name="Ketchum K.A."/>
            <person name="Kimmel B.E."/>
            <person name="Kodira C.D."/>
            <person name="Kraft C.L."/>
            <person name="Kravitz S."/>
            <person name="Kulp D."/>
            <person name="Lai Z."/>
            <person name="Lasko P."/>
            <person name="Lei Y."/>
            <person name="Levitsky A.A."/>
            <person name="Li J.H."/>
            <person name="Li Z."/>
            <person name="Liang Y."/>
            <person name="Lin X."/>
            <person name="Liu X."/>
            <person name="Mattei B."/>
            <person name="McIntosh T.C."/>
            <person name="McLeod M.P."/>
            <person name="McPherson D."/>
            <person name="Merkulov G."/>
            <person name="Milshina N.V."/>
            <person name="Mobarry C."/>
            <person name="Morris J."/>
            <person name="Moshrefi A."/>
            <person name="Mount S.M."/>
            <person name="Moy M."/>
            <person name="Murphy B."/>
            <person name="Murphy L."/>
            <person name="Muzny D.M."/>
            <person name="Nelson D.L."/>
            <person name="Nelson D.R."/>
            <person name="Nelson K.A."/>
            <person name="Nixon K."/>
            <person name="Nusskern D.R."/>
            <person name="Pacleb J.M."/>
            <person name="Palazzolo M."/>
            <person name="Pittman G.S."/>
            <person name="Pan S."/>
            <person name="Pollard J."/>
            <person name="Puri V."/>
            <person name="Reese M.G."/>
            <person name="Reinert K."/>
            <person name="Remington K."/>
            <person name="Saunders R.D.C."/>
            <person name="Scheeler F."/>
            <person name="Shen H."/>
            <person name="Shue B.C."/>
            <person name="Siden-Kiamos I."/>
            <person name="Simpson M."/>
            <person name="Skupski M.P."/>
            <person name="Smith T.J."/>
            <person name="Spier E."/>
            <person name="Spradling A.C."/>
            <person name="Stapleton M."/>
            <person name="Strong R."/>
            <person name="Sun E."/>
            <person name="Svirskas R."/>
            <person name="Tector C."/>
            <person name="Turner R."/>
            <person name="Venter E."/>
            <person name="Wang A.H."/>
            <person name="Wang X."/>
            <person name="Wang Z.-Y."/>
            <person name="Wassarman D.A."/>
            <person name="Weinstock G.M."/>
            <person name="Weissenbach J."/>
            <person name="Williams S.M."/>
            <person name="Woodage T."/>
            <person name="Worley K.C."/>
            <person name="Wu D."/>
            <person name="Yang S."/>
            <person name="Yao Q.A."/>
            <person name="Ye J."/>
            <person name="Yeh R.-F."/>
            <person name="Zaveri J.S."/>
            <person name="Zhan M."/>
            <person name="Zhang G."/>
            <person name="Zhao Q."/>
            <person name="Zheng L."/>
            <person name="Zheng X.H."/>
            <person name="Zhong F.N."/>
            <person name="Zhong W."/>
            <person name="Zhou X."/>
            <person name="Zhu S.C."/>
            <person name="Zhu X."/>
            <person name="Smith H.O."/>
            <person name="Gibbs R.A."/>
            <person name="Myers E.W."/>
            <person name="Rubin G.M."/>
            <person name="Venter J.C."/>
        </authorList>
    </citation>
    <scope>NUCLEOTIDE SEQUENCE [LARGE SCALE GENOMIC DNA]</scope>
    <source>
        <strain>Berkeley</strain>
    </source>
</reference>
<reference key="3">
    <citation type="journal article" date="2002" name="Genome Biol.">
        <title>Annotation of the Drosophila melanogaster euchromatic genome: a systematic review.</title>
        <authorList>
            <person name="Misra S."/>
            <person name="Crosby M.A."/>
            <person name="Mungall C.J."/>
            <person name="Matthews B.B."/>
            <person name="Campbell K.S."/>
            <person name="Hradecky P."/>
            <person name="Huang Y."/>
            <person name="Kaminker J.S."/>
            <person name="Millburn G.H."/>
            <person name="Prochnik S.E."/>
            <person name="Smith C.D."/>
            <person name="Tupy J.L."/>
            <person name="Whitfield E.J."/>
            <person name="Bayraktaroglu L."/>
            <person name="Berman B.P."/>
            <person name="Bettencourt B.R."/>
            <person name="Celniker S.E."/>
            <person name="de Grey A.D.N.J."/>
            <person name="Drysdale R.A."/>
            <person name="Harris N.L."/>
            <person name="Richter J."/>
            <person name="Russo S."/>
            <person name="Schroeder A.J."/>
            <person name="Shu S.Q."/>
            <person name="Stapleton M."/>
            <person name="Yamada C."/>
            <person name="Ashburner M."/>
            <person name="Gelbart W.M."/>
            <person name="Rubin G.M."/>
            <person name="Lewis S.E."/>
        </authorList>
    </citation>
    <scope>GENOME REANNOTATION</scope>
    <source>
        <strain>Berkeley</strain>
    </source>
</reference>
<reference key="4">
    <citation type="submission" date="2004-01" db="EMBL/GenBank/DDBJ databases">
        <authorList>
            <person name="Stapleton M."/>
            <person name="Carlson J.W."/>
            <person name="Chavez C."/>
            <person name="Frise E."/>
            <person name="George R.A."/>
            <person name="Pacleb J.M."/>
            <person name="Park S."/>
            <person name="Wan K.H."/>
            <person name="Yu C."/>
            <person name="Rubin G.M."/>
            <person name="Celniker S.E."/>
        </authorList>
    </citation>
    <scope>NUCLEOTIDE SEQUENCE [LARGE SCALE MRNA] (ISOFORM 2)</scope>
    <source>
        <strain>Berkeley</strain>
        <tissue>Testis</tissue>
    </source>
</reference>
<reference key="5">
    <citation type="journal article" date="2004" name="Neuron">
        <title>Rho GTPases regulate axon growth through convergent and divergent signaling pathways.</title>
        <authorList>
            <person name="Ng J."/>
            <person name="Luo L."/>
        </authorList>
    </citation>
    <scope>FUNCTION</scope>
    <scope>MUTAGENESIS OF CYS-468</scope>
</reference>
<reference key="6">
    <citation type="journal article" date="2005" name="Mech. Dev.">
        <title>Slingshot cofilin phosphatase localization is regulated by receptor tyrosine kinases and regulates cytoskeletal structure in the developing Drosophila eye.</title>
        <authorList>
            <person name="Rogers E.M."/>
            <person name="Hsiung F."/>
            <person name="Rodrigues A.B."/>
            <person name="Moses K."/>
        </authorList>
    </citation>
    <scope>FUNCTION</scope>
    <scope>DEVELOPMENTAL STAGE</scope>
</reference>
<reference key="7">
    <citation type="journal article" date="2008" name="J. Proteome Res.">
        <title>Phosphoproteome analysis of Drosophila melanogaster embryos.</title>
        <authorList>
            <person name="Zhai B."/>
            <person name="Villen J."/>
            <person name="Beausoleil S.A."/>
            <person name="Mintseris J."/>
            <person name="Gygi S.P."/>
        </authorList>
    </citation>
    <scope>PHOSPHORYLATION [LARGE SCALE ANALYSIS] AT SER-719</scope>
    <scope>IDENTIFICATION BY MASS SPECTROMETRY</scope>
    <source>
        <tissue>Embryo</tissue>
    </source>
</reference>
<sequence length="1045" mass="114997">MALVTVQRSPSVAGSCSNSDGESEDDEGNSKGNDRSECFFAGKGTALVLALKDIPPLTQSERRLSTDSTRSSNSTQSNNSDIQLHLQSMFYLLQREDTLKMAVKLESQRSNRTRYLVIASRSCCRSGTSDRRRHRIMRHHSVKVGGSAGTKSSTSPAVPTQRQLSVEQTATEASSKCDKTADKENATAAGDNKNTSGMEESCLLGIDCNERTTIGLVVPILADTTIHLDGDGGFSVKVYEKTHIFKPVSVQAMWSALQTLHKVSKKARENNFYASGPSHDWLSSYERRIESDQSCLNEWNAMDALESRRPPSPDAIRNKPPEKEETESVIKMKLKAIMMSVDLDEVTSKYIRGRLEEILDMDLGEYKSFIDAEMLVILGQMDAPTKIFEHVYLGSEWNASNLEELQKNGVRHILNVTREIDNFFPGTFEYFNVRVYDDEKTNLLKYWDDTFRYITRAKAEGSKVLVHCKMGVSRSASVVIAYAMKAYQWEFQQALEHVKKRRSCIKPNKNFLNQLETYSGMLDAMKNKEKLQRSKSETNLKSTKDARLLPGSEPTPLIQALNQAKSKSTGEAGVTPDGEEEDGSRMHRRSIAQKSQRRMVRRSSSTSPKTQTAVVTKQQSQSMENLTPERSVAEEPKNMRFPGSNGENYSVTQNQVLHIQKHTPLSVRTRIHDLEAHRADQLPQQPVWTSLTKLITQTSHLGKSVSGSSSGNIDSRRDSSCSDVFSSQVDSVFAKDEGEKRQRRKTHSWTESLGPSGGIVLDPTPQQQKQQSNAILRPRGTRQRELPSRHASWGSGDNRCCLPQRTSSGSYYDSNRNTTAIFEGVIQDLKRSSNCNVIEGVAVAVEPIVGVGEGTVKRTKQKLEESTSLKKRCQEESQELLLEAVDAGQRRCPSLYRSASSAHSPRQRQPLRCNSEELMHTSDIENKNTTPGDHEATVVLRVQGQTLADDQRISGNVQILKQNFEAKAGVVGTGGGGGGGTAAGSGSSSTIATSVSAVAGACSANPGKKTTSHQSLPSSPVAQHANHVSAASNSNSSASNSSDSS</sequence>
<comment type="function">
    <text evidence="5 6 7">Protein phosphatase which regulates actin filament dynamics (PubMed:11832213, PubMed:16169194). Dephosphorylates and activates the actin binding/depolymerizing factor tsr/cofilin, which subsequently binds to actin filaments and stimulates their disassembly (PubMed:11832213). Required for axon growth (PubMed:15572110).</text>
</comment>
<comment type="catalytic activity">
    <reaction evidence="3">
        <text>O-phospho-L-tyrosyl-[protein] + H2O = L-tyrosyl-[protein] + phosphate</text>
        <dbReference type="Rhea" id="RHEA:10684"/>
        <dbReference type="Rhea" id="RHEA-COMP:10136"/>
        <dbReference type="Rhea" id="RHEA-COMP:20101"/>
        <dbReference type="ChEBI" id="CHEBI:15377"/>
        <dbReference type="ChEBI" id="CHEBI:43474"/>
        <dbReference type="ChEBI" id="CHEBI:46858"/>
        <dbReference type="ChEBI" id="CHEBI:61978"/>
        <dbReference type="EC" id="3.1.3.48"/>
    </reaction>
</comment>
<comment type="catalytic activity">
    <reaction>
        <text>O-phospho-L-seryl-[protein] + H2O = L-seryl-[protein] + phosphate</text>
        <dbReference type="Rhea" id="RHEA:20629"/>
        <dbReference type="Rhea" id="RHEA-COMP:9863"/>
        <dbReference type="Rhea" id="RHEA-COMP:11604"/>
        <dbReference type="ChEBI" id="CHEBI:15377"/>
        <dbReference type="ChEBI" id="CHEBI:29999"/>
        <dbReference type="ChEBI" id="CHEBI:43474"/>
        <dbReference type="ChEBI" id="CHEBI:83421"/>
        <dbReference type="EC" id="3.1.3.16"/>
    </reaction>
</comment>
<comment type="catalytic activity">
    <reaction>
        <text>O-phospho-L-threonyl-[protein] + H2O = L-threonyl-[protein] + phosphate</text>
        <dbReference type="Rhea" id="RHEA:47004"/>
        <dbReference type="Rhea" id="RHEA-COMP:11060"/>
        <dbReference type="Rhea" id="RHEA-COMP:11605"/>
        <dbReference type="ChEBI" id="CHEBI:15377"/>
        <dbReference type="ChEBI" id="CHEBI:30013"/>
        <dbReference type="ChEBI" id="CHEBI:43474"/>
        <dbReference type="ChEBI" id="CHEBI:61977"/>
        <dbReference type="EC" id="3.1.3.16"/>
    </reaction>
</comment>
<comment type="subunit">
    <text evidence="5">Interacts with actin.</text>
</comment>
<comment type="subcellular location">
    <subcellularLocation>
        <location>Cytoplasm</location>
        <location>Cytoskeleton</location>
    </subcellularLocation>
</comment>
<comment type="alternative products">
    <event type="alternative splicing"/>
    <isoform>
        <id>Q6NN85-1</id>
        <name>1</name>
        <sequence type="displayed"/>
    </isoform>
    <isoform>
        <id>Q6NN85-2</id>
        <name>2</name>
        <sequence type="described" ref="VSP_016339"/>
    </isoform>
</comment>
<comment type="developmental stage">
    <text evidence="7">Strongly expressed in apical regions of the assembling ommatidia of the eye-imaginal disk. Apical expression requires the receptor tyrosine kinases Egfr and sev/sevenless.</text>
</comment>
<comment type="miscellaneous">
    <text>Tyrosine phosphatase activity has not been demonstrated for this protein to date.</text>
</comment>
<comment type="similarity">
    <text evidence="10">Belongs to the protein-tyrosine phosphatase family.</text>
</comment>
<comment type="sequence caution" evidence="10">
    <conflict type="erroneous gene model prediction">
        <sequence resource="EMBL-CDS" id="AAF56372"/>
    </conflict>
</comment>
<comment type="sequence caution" evidence="10">
    <conflict type="erroneous gene model prediction">
        <sequence resource="EMBL-CDS" id="AAN14027"/>
    </conflict>
</comment>
<name>SSH_DROME</name>
<evidence type="ECO:0000255" key="1">
    <source>
        <dbReference type="PROSITE-ProRule" id="PRU00160"/>
    </source>
</evidence>
<evidence type="ECO:0000255" key="2">
    <source>
        <dbReference type="PROSITE-ProRule" id="PRU01342"/>
    </source>
</evidence>
<evidence type="ECO:0000255" key="3">
    <source>
        <dbReference type="PROSITE-ProRule" id="PRU10044"/>
    </source>
</evidence>
<evidence type="ECO:0000256" key="4">
    <source>
        <dbReference type="SAM" id="MobiDB-lite"/>
    </source>
</evidence>
<evidence type="ECO:0000269" key="5">
    <source>
    </source>
</evidence>
<evidence type="ECO:0000269" key="6">
    <source>
    </source>
</evidence>
<evidence type="ECO:0000269" key="7">
    <source>
    </source>
</evidence>
<evidence type="ECO:0000269" key="8">
    <source>
    </source>
</evidence>
<evidence type="ECO:0000303" key="9">
    <source ref="4"/>
</evidence>
<evidence type="ECO:0000305" key="10"/>
<keyword id="KW-0009">Actin-binding</keyword>
<keyword id="KW-0025">Alternative splicing</keyword>
<keyword id="KW-0963">Cytoplasm</keyword>
<keyword id="KW-0206">Cytoskeleton</keyword>
<keyword id="KW-0378">Hydrolase</keyword>
<keyword id="KW-0597">Phosphoprotein</keyword>
<keyword id="KW-0904">Protein phosphatase</keyword>
<keyword id="KW-1185">Reference proteome</keyword>